<evidence type="ECO:0000255" key="1">
    <source>
        <dbReference type="HAMAP-Rule" id="MF_01859"/>
    </source>
</evidence>
<reference key="1">
    <citation type="submission" date="2007-11" db="EMBL/GenBank/DDBJ databases">
        <authorList>
            <consortium name="The Salmonella enterica serovar Arizonae Genome Sequencing Project"/>
            <person name="McClelland M."/>
            <person name="Sanderson E.K."/>
            <person name="Porwollik S."/>
            <person name="Spieth J."/>
            <person name="Clifton W.S."/>
            <person name="Fulton R."/>
            <person name="Chunyan W."/>
            <person name="Wollam A."/>
            <person name="Shah N."/>
            <person name="Pepin K."/>
            <person name="Bhonagiri V."/>
            <person name="Nash W."/>
            <person name="Johnson M."/>
            <person name="Thiruvilangam P."/>
            <person name="Wilson R."/>
        </authorList>
    </citation>
    <scope>NUCLEOTIDE SEQUENCE [LARGE SCALE GENOMIC DNA]</scope>
    <source>
        <strain>ATCC BAA-731 / CDC346-86 / RSK2980</strain>
    </source>
</reference>
<dbReference type="EC" id="2.1.1.174" evidence="1"/>
<dbReference type="EMBL" id="CP000880">
    <property type="protein sequence ID" value="ABX24185.1"/>
    <property type="molecule type" value="Genomic_DNA"/>
</dbReference>
<dbReference type="SMR" id="A9MPU2"/>
<dbReference type="STRING" id="41514.SARI_04407"/>
<dbReference type="KEGG" id="ses:SARI_04407"/>
<dbReference type="HOGENOM" id="CLU_040288_4_0_6"/>
<dbReference type="Proteomes" id="UP000002084">
    <property type="component" value="Chromosome"/>
</dbReference>
<dbReference type="GO" id="GO:0005737">
    <property type="term" value="C:cytoplasm"/>
    <property type="evidence" value="ECO:0007669"/>
    <property type="project" value="UniProtKB-SubCell"/>
</dbReference>
<dbReference type="GO" id="GO:0052916">
    <property type="term" value="F:23S rRNA (guanine(1835)-N(2))-methyltransferase activity"/>
    <property type="evidence" value="ECO:0007669"/>
    <property type="project" value="UniProtKB-EC"/>
</dbReference>
<dbReference type="GO" id="GO:0003676">
    <property type="term" value="F:nucleic acid binding"/>
    <property type="evidence" value="ECO:0007669"/>
    <property type="project" value="InterPro"/>
</dbReference>
<dbReference type="CDD" id="cd02440">
    <property type="entry name" value="AdoMet_MTases"/>
    <property type="match status" value="1"/>
</dbReference>
<dbReference type="FunFam" id="3.40.50.150:FF:000046">
    <property type="entry name" value="Ribosomal RNA large subunit methyltransferase G"/>
    <property type="match status" value="1"/>
</dbReference>
<dbReference type="FunFam" id="3.40.50.150:FF:000047">
    <property type="entry name" value="Ribosomal RNA large subunit methyltransferase G"/>
    <property type="match status" value="1"/>
</dbReference>
<dbReference type="Gene3D" id="3.40.50.150">
    <property type="entry name" value="Vaccinia Virus protein VP39"/>
    <property type="match status" value="2"/>
</dbReference>
<dbReference type="HAMAP" id="MF_01859">
    <property type="entry name" value="23SrRNA_methyltr_G"/>
    <property type="match status" value="1"/>
</dbReference>
<dbReference type="InterPro" id="IPR002052">
    <property type="entry name" value="DNA_methylase_N6_adenine_CS"/>
</dbReference>
<dbReference type="InterPro" id="IPR017237">
    <property type="entry name" value="rRNA_m2G-MeTrfase_RlmG"/>
</dbReference>
<dbReference type="InterPro" id="IPR046977">
    <property type="entry name" value="RsmC/RlmG"/>
</dbReference>
<dbReference type="InterPro" id="IPR029063">
    <property type="entry name" value="SAM-dependent_MTases_sf"/>
</dbReference>
<dbReference type="InterPro" id="IPR007848">
    <property type="entry name" value="Small_mtfrase_dom"/>
</dbReference>
<dbReference type="NCBIfam" id="NF011577">
    <property type="entry name" value="PRK15001.1"/>
    <property type="match status" value="1"/>
</dbReference>
<dbReference type="PANTHER" id="PTHR47816:SF5">
    <property type="entry name" value="RIBOSOMAL RNA LARGE SUBUNIT METHYLTRANSFERASE G"/>
    <property type="match status" value="1"/>
</dbReference>
<dbReference type="PANTHER" id="PTHR47816">
    <property type="entry name" value="RIBOSOMAL RNA SMALL SUBUNIT METHYLTRANSFERASE C"/>
    <property type="match status" value="1"/>
</dbReference>
<dbReference type="Pfam" id="PF05175">
    <property type="entry name" value="MTS"/>
    <property type="match status" value="1"/>
</dbReference>
<dbReference type="PIRSF" id="PIRSF037565">
    <property type="entry name" value="RRNA_m2G_Mtase_RsmD_prd"/>
    <property type="match status" value="1"/>
</dbReference>
<dbReference type="SUPFAM" id="SSF53335">
    <property type="entry name" value="S-adenosyl-L-methionine-dependent methyltransferases"/>
    <property type="match status" value="1"/>
</dbReference>
<name>RLMG_SALAR</name>
<comment type="function">
    <text evidence="1">Specifically methylates the guanine in position 1835 (m2G1835) of 23S rRNA.</text>
</comment>
<comment type="catalytic activity">
    <reaction evidence="1">
        <text>guanosine(1835) in 23S rRNA + S-adenosyl-L-methionine = N(2)-methylguanosine(1835) in 23S rRNA + S-adenosyl-L-homocysteine + H(+)</text>
        <dbReference type="Rhea" id="RHEA:42744"/>
        <dbReference type="Rhea" id="RHEA-COMP:10217"/>
        <dbReference type="Rhea" id="RHEA-COMP:10218"/>
        <dbReference type="ChEBI" id="CHEBI:15378"/>
        <dbReference type="ChEBI" id="CHEBI:57856"/>
        <dbReference type="ChEBI" id="CHEBI:59789"/>
        <dbReference type="ChEBI" id="CHEBI:74269"/>
        <dbReference type="ChEBI" id="CHEBI:74481"/>
        <dbReference type="EC" id="2.1.1.174"/>
    </reaction>
</comment>
<comment type="subcellular location">
    <subcellularLocation>
        <location evidence="1">Cytoplasm</location>
    </subcellularLocation>
</comment>
<comment type="similarity">
    <text evidence="1">Belongs to the methyltransferase superfamily. RlmG family.</text>
</comment>
<organism>
    <name type="scientific">Salmonella arizonae (strain ATCC BAA-731 / CDC346-86 / RSK2980)</name>
    <dbReference type="NCBI Taxonomy" id="41514"/>
    <lineage>
        <taxon>Bacteria</taxon>
        <taxon>Pseudomonadati</taxon>
        <taxon>Pseudomonadota</taxon>
        <taxon>Gammaproteobacteria</taxon>
        <taxon>Enterobacterales</taxon>
        <taxon>Enterobacteriaceae</taxon>
        <taxon>Salmonella</taxon>
    </lineage>
</organism>
<sequence>MSHVDDGFRSLTLKRFPQTDDVNPLLAWEAADEYLLQQLDETEIRGPVLILNDTFGALSCALAEHSPYSIGDSYLSELGTRENLRHNGIAESSVMFLDSTADYPQAPGVVLIKVPKTLALLEQQLRALRKVVTAQTRIIAGAKARDIHTSTLELFEKVLGPTTTTLAWKKARLINCTFSNPQLADAPQTLSWKLEDTGWTIHNHANVFSRTGLDIGARFFMQHLPENLEGEIVDLGCGNGVIGLSLLAKNPQANVVFVDESPMAVDSSRLNVETNMPEAFERCEFMINNALSGVEPYRFNAVFCNPPFHQKHALTDNIAWEMFHHARRCLKINGELYIVANRHLDYFHKLKKIFGNCATIATNNKFVILKAVKPGRRR</sequence>
<feature type="chain" id="PRO_0000366490" description="Ribosomal RNA large subunit methyltransferase G">
    <location>
        <begin position="1"/>
        <end position="378"/>
    </location>
</feature>
<protein>
    <recommendedName>
        <fullName evidence="1">Ribosomal RNA large subunit methyltransferase G</fullName>
        <ecNumber evidence="1">2.1.1.174</ecNumber>
    </recommendedName>
    <alternativeName>
        <fullName evidence="1">23S rRNA m2G1835 methyltransferase</fullName>
    </alternativeName>
    <alternativeName>
        <fullName evidence="1">rRNA (guanine-N(2)-)-methyltransferase RlmG</fullName>
    </alternativeName>
</protein>
<gene>
    <name evidence="1" type="primary">rlmG</name>
    <name type="ordered locus">SARI_04407</name>
</gene>
<keyword id="KW-0963">Cytoplasm</keyword>
<keyword id="KW-0489">Methyltransferase</keyword>
<keyword id="KW-1185">Reference proteome</keyword>
<keyword id="KW-0698">rRNA processing</keyword>
<keyword id="KW-0949">S-adenosyl-L-methionine</keyword>
<keyword id="KW-0808">Transferase</keyword>
<proteinExistence type="inferred from homology"/>
<accession>A9MPU2</accession>